<feature type="chain" id="PRO_1000140838" description="Small ribosomal subunit protein uS5">
    <location>
        <begin position="1"/>
        <end position="173"/>
    </location>
</feature>
<feature type="domain" description="S5 DRBM" evidence="1">
    <location>
        <begin position="18"/>
        <end position="81"/>
    </location>
</feature>
<evidence type="ECO:0000255" key="1">
    <source>
        <dbReference type="HAMAP-Rule" id="MF_01307"/>
    </source>
</evidence>
<evidence type="ECO:0000305" key="2"/>
<comment type="function">
    <text evidence="1">With S4 and S12 plays an important role in translational accuracy.</text>
</comment>
<comment type="function">
    <text evidence="1">Located at the back of the 30S subunit body where it stabilizes the conformation of the head with respect to the body.</text>
</comment>
<comment type="subunit">
    <text evidence="1">Part of the 30S ribosomal subunit. Contacts proteins S4 and S8.</text>
</comment>
<comment type="domain">
    <text>The N-terminal domain interacts with the head of the 30S subunit; the C-terminal domain interacts with the body and contacts protein S4. The interaction surface between S4 and S5 is involved in control of translational fidelity.</text>
</comment>
<comment type="similarity">
    <text evidence="1">Belongs to the universal ribosomal protein uS5 family.</text>
</comment>
<gene>
    <name evidence="1" type="primary">rpsE</name>
    <name type="ordered locus">Bpet4933</name>
</gene>
<dbReference type="EMBL" id="AM902716">
    <property type="protein sequence ID" value="CAP45285.1"/>
    <property type="molecule type" value="Genomic_DNA"/>
</dbReference>
<dbReference type="SMR" id="A9IHT0"/>
<dbReference type="STRING" id="94624.Bpet4933"/>
<dbReference type="KEGG" id="bpt:Bpet4933"/>
<dbReference type="eggNOG" id="COG0098">
    <property type="taxonomic scope" value="Bacteria"/>
</dbReference>
<dbReference type="Proteomes" id="UP000001225">
    <property type="component" value="Chromosome"/>
</dbReference>
<dbReference type="GO" id="GO:0015935">
    <property type="term" value="C:small ribosomal subunit"/>
    <property type="evidence" value="ECO:0007669"/>
    <property type="project" value="InterPro"/>
</dbReference>
<dbReference type="GO" id="GO:0019843">
    <property type="term" value="F:rRNA binding"/>
    <property type="evidence" value="ECO:0007669"/>
    <property type="project" value="UniProtKB-UniRule"/>
</dbReference>
<dbReference type="GO" id="GO:0003735">
    <property type="term" value="F:structural constituent of ribosome"/>
    <property type="evidence" value="ECO:0007669"/>
    <property type="project" value="InterPro"/>
</dbReference>
<dbReference type="GO" id="GO:0006412">
    <property type="term" value="P:translation"/>
    <property type="evidence" value="ECO:0007669"/>
    <property type="project" value="UniProtKB-UniRule"/>
</dbReference>
<dbReference type="FunFam" id="3.30.160.20:FF:000001">
    <property type="entry name" value="30S ribosomal protein S5"/>
    <property type="match status" value="1"/>
</dbReference>
<dbReference type="FunFam" id="3.30.230.10:FF:000002">
    <property type="entry name" value="30S ribosomal protein S5"/>
    <property type="match status" value="1"/>
</dbReference>
<dbReference type="Gene3D" id="3.30.160.20">
    <property type="match status" value="1"/>
</dbReference>
<dbReference type="Gene3D" id="3.30.230.10">
    <property type="match status" value="1"/>
</dbReference>
<dbReference type="HAMAP" id="MF_01307_B">
    <property type="entry name" value="Ribosomal_uS5_B"/>
    <property type="match status" value="1"/>
</dbReference>
<dbReference type="InterPro" id="IPR020568">
    <property type="entry name" value="Ribosomal_Su5_D2-typ_SF"/>
</dbReference>
<dbReference type="InterPro" id="IPR000851">
    <property type="entry name" value="Ribosomal_uS5"/>
</dbReference>
<dbReference type="InterPro" id="IPR005712">
    <property type="entry name" value="Ribosomal_uS5_bac-type"/>
</dbReference>
<dbReference type="InterPro" id="IPR005324">
    <property type="entry name" value="Ribosomal_uS5_C"/>
</dbReference>
<dbReference type="InterPro" id="IPR013810">
    <property type="entry name" value="Ribosomal_uS5_N"/>
</dbReference>
<dbReference type="InterPro" id="IPR018192">
    <property type="entry name" value="Ribosomal_uS5_N_CS"/>
</dbReference>
<dbReference type="InterPro" id="IPR014721">
    <property type="entry name" value="Ribsml_uS5_D2-typ_fold_subgr"/>
</dbReference>
<dbReference type="NCBIfam" id="TIGR01021">
    <property type="entry name" value="rpsE_bact"/>
    <property type="match status" value="1"/>
</dbReference>
<dbReference type="PANTHER" id="PTHR48277">
    <property type="entry name" value="MITOCHONDRIAL RIBOSOMAL PROTEIN S5"/>
    <property type="match status" value="1"/>
</dbReference>
<dbReference type="PANTHER" id="PTHR48277:SF1">
    <property type="entry name" value="MITOCHONDRIAL RIBOSOMAL PROTEIN S5"/>
    <property type="match status" value="1"/>
</dbReference>
<dbReference type="Pfam" id="PF00333">
    <property type="entry name" value="Ribosomal_S5"/>
    <property type="match status" value="1"/>
</dbReference>
<dbReference type="Pfam" id="PF03719">
    <property type="entry name" value="Ribosomal_S5_C"/>
    <property type="match status" value="1"/>
</dbReference>
<dbReference type="SUPFAM" id="SSF54768">
    <property type="entry name" value="dsRNA-binding domain-like"/>
    <property type="match status" value="1"/>
</dbReference>
<dbReference type="SUPFAM" id="SSF54211">
    <property type="entry name" value="Ribosomal protein S5 domain 2-like"/>
    <property type="match status" value="1"/>
</dbReference>
<dbReference type="PROSITE" id="PS00585">
    <property type="entry name" value="RIBOSOMAL_S5"/>
    <property type="match status" value="1"/>
</dbReference>
<dbReference type="PROSITE" id="PS50881">
    <property type="entry name" value="S5_DSRBD"/>
    <property type="match status" value="1"/>
</dbReference>
<name>RS5_BORPD</name>
<accession>A9IHT0</accession>
<sequence>MAKVQGKGAAEKENDDGLREKMIAVNRVSKVVKGGRTMSFAALTVVGDGDGRIGMGKGKAREVPVSVQKAMEQARRGMFKVALKNGTLHHTVVGKHGASTVLISPAAEGTGVIAGGPMRAIFEVMGVRNVVAKSLGSSNPYNMVRATLNGLRASLTPSEVAAKRGKTVEEILG</sequence>
<proteinExistence type="inferred from homology"/>
<protein>
    <recommendedName>
        <fullName evidence="1">Small ribosomal subunit protein uS5</fullName>
    </recommendedName>
    <alternativeName>
        <fullName evidence="2">30S ribosomal protein S5</fullName>
    </alternativeName>
</protein>
<organism>
    <name type="scientific">Bordetella petrii (strain ATCC BAA-461 / DSM 12804 / CCUG 43448)</name>
    <dbReference type="NCBI Taxonomy" id="340100"/>
    <lineage>
        <taxon>Bacteria</taxon>
        <taxon>Pseudomonadati</taxon>
        <taxon>Pseudomonadota</taxon>
        <taxon>Betaproteobacteria</taxon>
        <taxon>Burkholderiales</taxon>
        <taxon>Alcaligenaceae</taxon>
        <taxon>Bordetella</taxon>
    </lineage>
</organism>
<keyword id="KW-0687">Ribonucleoprotein</keyword>
<keyword id="KW-0689">Ribosomal protein</keyword>
<keyword id="KW-0694">RNA-binding</keyword>
<keyword id="KW-0699">rRNA-binding</keyword>
<reference key="1">
    <citation type="journal article" date="2008" name="BMC Genomics">
        <title>The missing link: Bordetella petrii is endowed with both the metabolic versatility of environmental bacteria and virulence traits of pathogenic Bordetellae.</title>
        <authorList>
            <person name="Gross R."/>
            <person name="Guzman C.A."/>
            <person name="Sebaihia M."/>
            <person name="Martin dos Santos V.A.P."/>
            <person name="Pieper D.H."/>
            <person name="Koebnik R."/>
            <person name="Lechner M."/>
            <person name="Bartels D."/>
            <person name="Buhrmester J."/>
            <person name="Choudhuri J.V."/>
            <person name="Ebensen T."/>
            <person name="Gaigalat L."/>
            <person name="Herrmann S."/>
            <person name="Khachane A.N."/>
            <person name="Larisch C."/>
            <person name="Link S."/>
            <person name="Linke B."/>
            <person name="Meyer F."/>
            <person name="Mormann S."/>
            <person name="Nakunst D."/>
            <person name="Rueckert C."/>
            <person name="Schneiker-Bekel S."/>
            <person name="Schulze K."/>
            <person name="Voerholter F.-J."/>
            <person name="Yevsa T."/>
            <person name="Engle J.T."/>
            <person name="Goldman W.E."/>
            <person name="Puehler A."/>
            <person name="Goebel U.B."/>
            <person name="Goesmann A."/>
            <person name="Bloecker H."/>
            <person name="Kaiser O."/>
            <person name="Martinez-Arias R."/>
        </authorList>
    </citation>
    <scope>NUCLEOTIDE SEQUENCE [LARGE SCALE GENOMIC DNA]</scope>
    <source>
        <strain>ATCC BAA-461 / DSM 12804 / CCUG 43448</strain>
    </source>
</reference>